<keyword id="KW-0249">Electron transport</keyword>
<keyword id="KW-0349">Heme</keyword>
<keyword id="KW-0408">Iron</keyword>
<keyword id="KW-0472">Membrane</keyword>
<keyword id="KW-0479">Metal-binding</keyword>
<keyword id="KW-0496">Mitochondrion</keyword>
<keyword id="KW-0999">Mitochondrion inner membrane</keyword>
<keyword id="KW-0679">Respiratory chain</keyword>
<keyword id="KW-0812">Transmembrane</keyword>
<keyword id="KW-1133">Transmembrane helix</keyword>
<keyword id="KW-0813">Transport</keyword>
<keyword id="KW-0830">Ubiquinone</keyword>
<name>CYB_CHAFO</name>
<organism>
    <name type="scientific">Chaetodipus formosus</name>
    <name type="common">Long-tailed pocket mouse</name>
    <name type="synonym">Perognathus formosus</name>
    <dbReference type="NCBI Taxonomy" id="38678"/>
    <lineage>
        <taxon>Eukaryota</taxon>
        <taxon>Metazoa</taxon>
        <taxon>Chordata</taxon>
        <taxon>Craniata</taxon>
        <taxon>Vertebrata</taxon>
        <taxon>Euteleostomi</taxon>
        <taxon>Mammalia</taxon>
        <taxon>Eutheria</taxon>
        <taxon>Euarchontoglires</taxon>
        <taxon>Glires</taxon>
        <taxon>Rodentia</taxon>
        <taxon>Castorimorpha</taxon>
        <taxon>Heteromyidae</taxon>
        <taxon>Perognathinae</taxon>
        <taxon>Chaetodipus</taxon>
    </lineage>
</organism>
<evidence type="ECO:0000250" key="1"/>
<evidence type="ECO:0000250" key="2">
    <source>
        <dbReference type="UniProtKB" id="P00157"/>
    </source>
</evidence>
<evidence type="ECO:0000255" key="3">
    <source>
        <dbReference type="PROSITE-ProRule" id="PRU00967"/>
    </source>
</evidence>
<evidence type="ECO:0000255" key="4">
    <source>
        <dbReference type="PROSITE-ProRule" id="PRU00968"/>
    </source>
</evidence>
<dbReference type="EMBL" id="AY926387">
    <property type="protein sequence ID" value="AAY23230.1"/>
    <property type="molecule type" value="Genomic_DNA"/>
</dbReference>
<dbReference type="SMR" id="Q508L6"/>
<dbReference type="GO" id="GO:0005743">
    <property type="term" value="C:mitochondrial inner membrane"/>
    <property type="evidence" value="ECO:0007669"/>
    <property type="project" value="UniProtKB-SubCell"/>
</dbReference>
<dbReference type="GO" id="GO:0045275">
    <property type="term" value="C:respiratory chain complex III"/>
    <property type="evidence" value="ECO:0007669"/>
    <property type="project" value="InterPro"/>
</dbReference>
<dbReference type="GO" id="GO:0046872">
    <property type="term" value="F:metal ion binding"/>
    <property type="evidence" value="ECO:0007669"/>
    <property type="project" value="UniProtKB-KW"/>
</dbReference>
<dbReference type="GO" id="GO:0008121">
    <property type="term" value="F:ubiquinol-cytochrome-c reductase activity"/>
    <property type="evidence" value="ECO:0007669"/>
    <property type="project" value="InterPro"/>
</dbReference>
<dbReference type="GO" id="GO:0006122">
    <property type="term" value="P:mitochondrial electron transport, ubiquinol to cytochrome c"/>
    <property type="evidence" value="ECO:0007669"/>
    <property type="project" value="TreeGrafter"/>
</dbReference>
<dbReference type="CDD" id="cd00290">
    <property type="entry name" value="cytochrome_b_C"/>
    <property type="match status" value="1"/>
</dbReference>
<dbReference type="CDD" id="cd00284">
    <property type="entry name" value="Cytochrome_b_N"/>
    <property type="match status" value="1"/>
</dbReference>
<dbReference type="FunFam" id="1.20.810.10:FF:000002">
    <property type="entry name" value="Cytochrome b"/>
    <property type="match status" value="1"/>
</dbReference>
<dbReference type="Gene3D" id="1.20.810.10">
    <property type="entry name" value="Cytochrome Bc1 Complex, Chain C"/>
    <property type="match status" value="1"/>
</dbReference>
<dbReference type="InterPro" id="IPR005798">
    <property type="entry name" value="Cyt_b/b6_C"/>
</dbReference>
<dbReference type="InterPro" id="IPR036150">
    <property type="entry name" value="Cyt_b/b6_C_sf"/>
</dbReference>
<dbReference type="InterPro" id="IPR005797">
    <property type="entry name" value="Cyt_b/b6_N"/>
</dbReference>
<dbReference type="InterPro" id="IPR027387">
    <property type="entry name" value="Cytb/b6-like_sf"/>
</dbReference>
<dbReference type="InterPro" id="IPR030689">
    <property type="entry name" value="Cytochrome_b"/>
</dbReference>
<dbReference type="InterPro" id="IPR048260">
    <property type="entry name" value="Cytochrome_b_C_euk/bac"/>
</dbReference>
<dbReference type="InterPro" id="IPR048259">
    <property type="entry name" value="Cytochrome_b_N_euk/bac"/>
</dbReference>
<dbReference type="InterPro" id="IPR016174">
    <property type="entry name" value="Di-haem_cyt_TM"/>
</dbReference>
<dbReference type="PANTHER" id="PTHR19271">
    <property type="entry name" value="CYTOCHROME B"/>
    <property type="match status" value="1"/>
</dbReference>
<dbReference type="PANTHER" id="PTHR19271:SF16">
    <property type="entry name" value="CYTOCHROME B"/>
    <property type="match status" value="1"/>
</dbReference>
<dbReference type="Pfam" id="PF00032">
    <property type="entry name" value="Cytochrom_B_C"/>
    <property type="match status" value="1"/>
</dbReference>
<dbReference type="Pfam" id="PF00033">
    <property type="entry name" value="Cytochrome_B"/>
    <property type="match status" value="1"/>
</dbReference>
<dbReference type="PIRSF" id="PIRSF038885">
    <property type="entry name" value="COB"/>
    <property type="match status" value="1"/>
</dbReference>
<dbReference type="SUPFAM" id="SSF81648">
    <property type="entry name" value="a domain/subunit of cytochrome bc1 complex (Ubiquinol-cytochrome c reductase)"/>
    <property type="match status" value="1"/>
</dbReference>
<dbReference type="SUPFAM" id="SSF81342">
    <property type="entry name" value="Transmembrane di-heme cytochromes"/>
    <property type="match status" value="1"/>
</dbReference>
<dbReference type="PROSITE" id="PS51003">
    <property type="entry name" value="CYTB_CTER"/>
    <property type="match status" value="1"/>
</dbReference>
<dbReference type="PROSITE" id="PS51002">
    <property type="entry name" value="CYTB_NTER"/>
    <property type="match status" value="1"/>
</dbReference>
<gene>
    <name type="primary">MT-CYB</name>
    <name type="synonym">COB</name>
    <name type="synonym">CYTB</name>
    <name type="synonym">MTCYB</name>
</gene>
<comment type="function">
    <text evidence="2">Component of the ubiquinol-cytochrome c reductase complex (complex III or cytochrome b-c1 complex) that is part of the mitochondrial respiratory chain. The b-c1 complex mediates electron transfer from ubiquinol to cytochrome c. Contributes to the generation of a proton gradient across the mitochondrial membrane that is then used for ATP synthesis.</text>
</comment>
<comment type="cofactor">
    <cofactor evidence="2">
        <name>heme b</name>
        <dbReference type="ChEBI" id="CHEBI:60344"/>
    </cofactor>
    <text evidence="2">Binds 2 heme b groups non-covalently.</text>
</comment>
<comment type="subunit">
    <text evidence="2">The cytochrome bc1 complex contains 11 subunits: 3 respiratory subunits (MT-CYB, CYC1 and UQCRFS1), 2 core proteins (UQCRC1 and UQCRC2) and 6 low-molecular weight proteins (UQCRH/QCR6, UQCRB/QCR7, UQCRQ/QCR8, UQCR10/QCR9, UQCR11/QCR10 and a cleavage product of UQCRFS1). This cytochrome bc1 complex then forms a dimer.</text>
</comment>
<comment type="subcellular location">
    <subcellularLocation>
        <location evidence="2">Mitochondrion inner membrane</location>
        <topology evidence="2">Multi-pass membrane protein</topology>
    </subcellularLocation>
</comment>
<comment type="miscellaneous">
    <text evidence="1">Heme 1 (or BL or b562) is low-potential and absorbs at about 562 nm, and heme 2 (or BH or b566) is high-potential and absorbs at about 566 nm.</text>
</comment>
<comment type="similarity">
    <text evidence="3 4">Belongs to the cytochrome b family.</text>
</comment>
<comment type="caution">
    <text evidence="2">The full-length protein contains only eight transmembrane helices, not nine as predicted by bioinformatics tools.</text>
</comment>
<feature type="chain" id="PRO_0000257882" description="Cytochrome b">
    <location>
        <begin position="1"/>
        <end position="379"/>
    </location>
</feature>
<feature type="transmembrane region" description="Helical" evidence="2">
    <location>
        <begin position="33"/>
        <end position="53"/>
    </location>
</feature>
<feature type="transmembrane region" description="Helical" evidence="2">
    <location>
        <begin position="77"/>
        <end position="98"/>
    </location>
</feature>
<feature type="transmembrane region" description="Helical" evidence="2">
    <location>
        <begin position="113"/>
        <end position="133"/>
    </location>
</feature>
<feature type="transmembrane region" description="Helical" evidence="2">
    <location>
        <begin position="178"/>
        <end position="198"/>
    </location>
</feature>
<feature type="transmembrane region" description="Helical" evidence="2">
    <location>
        <begin position="226"/>
        <end position="246"/>
    </location>
</feature>
<feature type="transmembrane region" description="Helical" evidence="2">
    <location>
        <begin position="288"/>
        <end position="308"/>
    </location>
</feature>
<feature type="transmembrane region" description="Helical" evidence="2">
    <location>
        <begin position="320"/>
        <end position="340"/>
    </location>
</feature>
<feature type="transmembrane region" description="Helical" evidence="2">
    <location>
        <begin position="347"/>
        <end position="367"/>
    </location>
</feature>
<feature type="binding site" description="axial binding residue" evidence="2">
    <location>
        <position position="83"/>
    </location>
    <ligand>
        <name>heme b</name>
        <dbReference type="ChEBI" id="CHEBI:60344"/>
        <label>b562</label>
    </ligand>
    <ligandPart>
        <name>Fe</name>
        <dbReference type="ChEBI" id="CHEBI:18248"/>
    </ligandPart>
</feature>
<feature type="binding site" description="axial binding residue" evidence="2">
    <location>
        <position position="97"/>
    </location>
    <ligand>
        <name>heme b</name>
        <dbReference type="ChEBI" id="CHEBI:60344"/>
        <label>b566</label>
    </ligand>
    <ligandPart>
        <name>Fe</name>
        <dbReference type="ChEBI" id="CHEBI:18248"/>
    </ligandPart>
</feature>
<feature type="binding site" description="axial binding residue" evidence="2">
    <location>
        <position position="182"/>
    </location>
    <ligand>
        <name>heme b</name>
        <dbReference type="ChEBI" id="CHEBI:60344"/>
        <label>b562</label>
    </ligand>
    <ligandPart>
        <name>Fe</name>
        <dbReference type="ChEBI" id="CHEBI:18248"/>
    </ligandPart>
</feature>
<feature type="binding site" description="axial binding residue" evidence="2">
    <location>
        <position position="196"/>
    </location>
    <ligand>
        <name>heme b</name>
        <dbReference type="ChEBI" id="CHEBI:60344"/>
        <label>b566</label>
    </ligand>
    <ligandPart>
        <name>Fe</name>
        <dbReference type="ChEBI" id="CHEBI:18248"/>
    </ligandPart>
</feature>
<feature type="binding site" evidence="2">
    <location>
        <position position="201"/>
    </location>
    <ligand>
        <name>a ubiquinone</name>
        <dbReference type="ChEBI" id="CHEBI:16389"/>
    </ligand>
</feature>
<reference key="1">
    <citation type="journal article" date="2005" name="J. Mammal.">
        <title>Phylogenetics of the new world rodent family Heteromyidae.</title>
        <authorList>
            <person name="Alexander L.F."/>
            <person name="Riddle B.R."/>
        </authorList>
    </citation>
    <scope>NUCLEOTIDE SEQUENCE [GENOMIC DNA]</scope>
    <source>
        <strain>Isolate LVT 987</strain>
    </source>
</reference>
<geneLocation type="mitochondrion"/>
<sequence length="379" mass="42713">MTIIRKSHPLMKMVNHAFIDLPAPSNISGWWNFGSLLGLCLIIQISSGLFLAMHYTSDTLTAFSSVAHICRDVNYGWLIRYIHANGASLFFICLYLHIGRGIYYGSYLYKETWNIGIILLFLTMATAFMGYVLPWGQMSFWGATVITNLLSAIPYVGTDLVEWIWGGFSVDKATLTRFFAFHFILPFIIAAMVMVHLLFLHETGSNNPLGIPSDSDKIPFHPYYTSKDLLGVVILLALFLTFVLFFPDLLGDPDNYSPANPLNTPPHIKPEWYFLFAYAILRSIPNKLGGVIALVLSILVLAVFPLLHTANQRSMMFRPISQTLFWTLVSDLMILTWIGGQPVEPPFIIIGQIASILYFLIILILLPIAGLIENKILKW</sequence>
<protein>
    <recommendedName>
        <fullName>Cytochrome b</fullName>
    </recommendedName>
    <alternativeName>
        <fullName>Complex III subunit 3</fullName>
    </alternativeName>
    <alternativeName>
        <fullName>Complex III subunit III</fullName>
    </alternativeName>
    <alternativeName>
        <fullName>Cytochrome b-c1 complex subunit 3</fullName>
    </alternativeName>
    <alternativeName>
        <fullName>Ubiquinol-cytochrome-c reductase complex cytochrome b subunit</fullName>
    </alternativeName>
</protein>
<accession>Q508L6</accession>
<proteinExistence type="inferred from homology"/>